<protein>
    <recommendedName>
        <fullName>Formin-like protein 17</fullName>
        <shortName>AtFH17</shortName>
    </recommendedName>
</protein>
<gene>
    <name type="primary">FH17</name>
    <name type="ordered locus">At3g32400</name>
    <name type="ORF">F1D9.13</name>
</gene>
<organism>
    <name type="scientific">Arabidopsis thaliana</name>
    <name type="common">Mouse-ear cress</name>
    <dbReference type="NCBI Taxonomy" id="3702"/>
    <lineage>
        <taxon>Eukaryota</taxon>
        <taxon>Viridiplantae</taxon>
        <taxon>Streptophyta</taxon>
        <taxon>Embryophyta</taxon>
        <taxon>Tracheophyta</taxon>
        <taxon>Spermatophyta</taxon>
        <taxon>Magnoliopsida</taxon>
        <taxon>eudicotyledons</taxon>
        <taxon>Gunneridae</taxon>
        <taxon>Pentapetalae</taxon>
        <taxon>rosids</taxon>
        <taxon>malvids</taxon>
        <taxon>Brassicales</taxon>
        <taxon>Brassicaceae</taxon>
        <taxon>Camelineae</taxon>
        <taxon>Arabidopsis</taxon>
    </lineage>
</organism>
<evidence type="ECO:0000255" key="1">
    <source>
        <dbReference type="PROSITE-ProRule" id="PRU00774"/>
    </source>
</evidence>
<evidence type="ECO:0000256" key="2">
    <source>
        <dbReference type="SAM" id="MobiDB-lite"/>
    </source>
</evidence>
<evidence type="ECO:0000305" key="3"/>
<name>FH17_ARATH</name>
<feature type="chain" id="PRO_0000308543" description="Formin-like protein 17">
    <location>
        <begin position="1"/>
        <end position="495"/>
    </location>
</feature>
<feature type="domain" description="FH2" evidence="1">
    <location>
        <begin position="86"/>
        <end position="486"/>
    </location>
</feature>
<feature type="region of interest" description="Disordered" evidence="2">
    <location>
        <begin position="1"/>
        <end position="92"/>
    </location>
</feature>
<feature type="compositionally biased region" description="Pro residues" evidence="2">
    <location>
        <begin position="19"/>
        <end position="29"/>
    </location>
</feature>
<feature type="compositionally biased region" description="Low complexity" evidence="2">
    <location>
        <begin position="30"/>
        <end position="39"/>
    </location>
</feature>
<keyword id="KW-1185">Reference proteome</keyword>
<accession>Q9LH02</accession>
<accession>F4JBF7</accession>
<sequence>MDIRELIDITELSSIATEGPPPPPPPPLLQPHHSALSSSPLPPPLPPKKLLATTNTPPPPPPPLHSNSQMGAPTSSLVLKSPHNLKGQGQTRKANLKPYHWLKLTRAVQGSLWAEAQKSDEAATAPDFDISEIEKLFSAVNLSSNSENNGGKSGRRARPKVEKVQLIELKRAYNCEIMLSKVKIPLPDLMSSVLALDESVIDVDQVDNLIKFCPTKEEAELLKGFIGNKETLGRCEQFFLELLKVPRVETKLRVFSFKIQFHSQVTDLRRGLNTIHSATNEVRGSTKLKRIMQTILSLGNALNHGTARGSAIGFHLDSLLKLTDTRSRNSKMTLMHYLCKVLAEKLPGLLNFPKDMVSLEAATNIQLKYLAEEMQATSKGLEKVVQEFTASETDCQISKHFHMNLKEFLSVAEGEVRSLASLYSTVGGSADALALYFGEDPARVPFEQVVSTLQNFVRIFVRSHEENCKQVEFEKKRAQKEAENEKLKKGVYNEN</sequence>
<comment type="similarity">
    <text evidence="3">Belongs to the formin-like family. Class-II subfamily.</text>
</comment>
<comment type="sequence caution" evidence="3">
    <conflict type="erroneous gene model prediction">
        <sequence resource="EMBL-CDS" id="AEE77697"/>
    </conflict>
</comment>
<comment type="sequence caution" evidence="3">
    <conflict type="erroneous gene model prediction">
        <sequence resource="EMBL-CDS" id="BAB01984"/>
    </conflict>
</comment>
<dbReference type="EMBL" id="AP002460">
    <property type="protein sequence ID" value="BAB01984.1"/>
    <property type="status" value="ALT_SEQ"/>
    <property type="molecule type" value="Genomic_DNA"/>
</dbReference>
<dbReference type="EMBL" id="CP002686">
    <property type="protein sequence ID" value="AEE77697.1"/>
    <property type="status" value="ALT_SEQ"/>
    <property type="molecule type" value="Genomic_DNA"/>
</dbReference>
<dbReference type="EMBL" id="CP002686">
    <property type="protein sequence ID" value="ANM64255.1"/>
    <property type="molecule type" value="Genomic_DNA"/>
</dbReference>
<dbReference type="RefSeq" id="NP_001326296.1">
    <property type="nucleotide sequence ID" value="NM_001339067.1"/>
</dbReference>
<dbReference type="RefSeq" id="NP_189774.2">
    <property type="nucleotide sequence ID" value="NM_114054.2"/>
</dbReference>
<dbReference type="SMR" id="Q9LH02"/>
<dbReference type="STRING" id="3702.Q9LH02"/>
<dbReference type="PaxDb" id="3702-AT3G32400.1"/>
<dbReference type="EnsemblPlants" id="AT3G32400.2">
    <property type="protein sequence ID" value="AT3G32400.2"/>
    <property type="gene ID" value="AT3G32400"/>
</dbReference>
<dbReference type="GeneID" id="823026"/>
<dbReference type="Gramene" id="AT3G32400.2">
    <property type="protein sequence ID" value="AT3G32400.2"/>
    <property type="gene ID" value="AT3G32400"/>
</dbReference>
<dbReference type="KEGG" id="ath:AT3G32400"/>
<dbReference type="Araport" id="AT3G32400"/>
<dbReference type="TAIR" id="AT3G32400"/>
<dbReference type="eggNOG" id="KOG1922">
    <property type="taxonomic scope" value="Eukaryota"/>
</dbReference>
<dbReference type="HOGENOM" id="CLU_028505_0_0_1"/>
<dbReference type="InParanoid" id="Q9LH02"/>
<dbReference type="OMA" id="CDHYGEN"/>
<dbReference type="PhylomeDB" id="Q9LH02"/>
<dbReference type="PRO" id="PR:Q9LH02"/>
<dbReference type="Proteomes" id="UP000006548">
    <property type="component" value="Chromosome 3"/>
</dbReference>
<dbReference type="ExpressionAtlas" id="Q9LH02">
    <property type="expression patterns" value="baseline and differential"/>
</dbReference>
<dbReference type="Gene3D" id="1.20.58.2220">
    <property type="entry name" value="Formin, FH2 domain"/>
    <property type="match status" value="1"/>
</dbReference>
<dbReference type="InterPro" id="IPR015425">
    <property type="entry name" value="FH2_Formin"/>
</dbReference>
<dbReference type="InterPro" id="IPR042201">
    <property type="entry name" value="FH2_Formin_sf"/>
</dbReference>
<dbReference type="InterPro" id="IPR051144">
    <property type="entry name" value="Formin_homology_domain"/>
</dbReference>
<dbReference type="PANTHER" id="PTHR45733">
    <property type="entry name" value="FORMIN-J"/>
    <property type="match status" value="1"/>
</dbReference>
<dbReference type="PANTHER" id="PTHR45733:SF8">
    <property type="entry name" value="FORMIN-J"/>
    <property type="match status" value="1"/>
</dbReference>
<dbReference type="Pfam" id="PF02181">
    <property type="entry name" value="FH2"/>
    <property type="match status" value="1"/>
</dbReference>
<dbReference type="SMART" id="SM00498">
    <property type="entry name" value="FH2"/>
    <property type="match status" value="1"/>
</dbReference>
<dbReference type="SUPFAM" id="SSF101447">
    <property type="entry name" value="Formin homology 2 domain (FH2 domain)"/>
    <property type="match status" value="1"/>
</dbReference>
<dbReference type="PROSITE" id="PS51444">
    <property type="entry name" value="FH2"/>
    <property type="match status" value="1"/>
</dbReference>
<reference key="1">
    <citation type="submission" date="2000-06" db="EMBL/GenBank/DDBJ databases">
        <title>Structural analysis of Arabidopsis thaliana chromosome 3. III.</title>
        <authorList>
            <person name="Nakamura Y."/>
        </authorList>
    </citation>
    <scope>NUCLEOTIDE SEQUENCE [LARGE SCALE GENOMIC DNA]</scope>
    <source>
        <strain>cv. Columbia</strain>
    </source>
</reference>
<reference key="2">
    <citation type="journal article" date="2017" name="Plant J.">
        <title>Araport11: a complete reannotation of the Arabidopsis thaliana reference genome.</title>
        <authorList>
            <person name="Cheng C.Y."/>
            <person name="Krishnakumar V."/>
            <person name="Chan A.P."/>
            <person name="Thibaud-Nissen F."/>
            <person name="Schobel S."/>
            <person name="Town C.D."/>
        </authorList>
    </citation>
    <scope>GENOME REANNOTATION</scope>
    <source>
        <strain>cv. Columbia</strain>
    </source>
</reference>
<reference key="3">
    <citation type="journal article" date="2002" name="Trends Plant Sci.">
        <title>Formins: intermediates in signal-transduction cascades that affect cytoskeletal reorganization.</title>
        <authorList>
            <person name="Deeks M.J."/>
            <person name="Hussey P.J."/>
            <person name="Davies B."/>
        </authorList>
    </citation>
    <scope>GENE FAMILY ORGANIZATION</scope>
    <scope>NOMENCLATURE</scope>
</reference>
<reference key="4">
    <citation type="journal article" date="2004" name="BMC Genomics">
        <title>Formin homology 2 domains occur in multiple contexts in angiosperms.</title>
        <authorList>
            <person name="Cvrckova F."/>
            <person name="Novotny M."/>
            <person name="Pickova D."/>
            <person name="Zarsky V."/>
        </authorList>
    </citation>
    <scope>GENE FAMILY ORGANIZATION</scope>
    <scope>NOMENCLATURE</scope>
</reference>
<proteinExistence type="inferred from homology"/>